<accession>C8VQG9</accession>
<accession>Q5BF73</accession>
<comment type="function">
    <text evidence="2 3 5 6 7 9">Methyltransferase that performs automethylation at Met-207 (PubMed:23532849). No other methyl-accepting substrate has been identified yet (PubMed:23532849). Component of the velvet transcription factor complex that acts as a global regulator for secondary metabolite gene expression (PubMed:15075281, PubMed:20132440). Controls the expression of the sterigmatocystin, penicillin, and lovastatin gene clusters (PubMed:15075281, PubMed:16968230). Controls light-dependent formation of the velB-vosA complex, veA protein modification, and is required for light-mediated inhibition of sexual development (PubMed:21152013). Within the velvet complex, controls light-dependent secondary metabolism (PubMed:18556559). Involved in the defense response against Drosophila melanogaster larval grazing (PubMed:24023705).</text>
</comment>
<comment type="catalytic activity">
    <reaction evidence="8">
        <text>L-methionyl-[protein] + S-adenosyl-L-methionine = S-methyl-L-methionyl-[protein] + S-adenosyl-L-homocysteine</text>
        <dbReference type="Rhea" id="RHEA:60560"/>
        <dbReference type="Rhea" id="RHEA-COMP:12313"/>
        <dbReference type="Rhea" id="RHEA-COMP:15592"/>
        <dbReference type="ChEBI" id="CHEBI:16044"/>
        <dbReference type="ChEBI" id="CHEBI:57856"/>
        <dbReference type="ChEBI" id="CHEBI:59789"/>
        <dbReference type="ChEBI" id="CHEBI:142742"/>
    </reaction>
    <physiologicalReaction direction="left-to-right" evidence="8">
        <dbReference type="Rhea" id="RHEA:60561"/>
    </physiologicalReaction>
</comment>
<comment type="subunit">
    <text evidence="5">Component of the heterotrimeric velvet complex composed of laeA, veA and velB; VeA acting as a bridging protein between laeA and velB (PubMed:18556559).</text>
</comment>
<comment type="subcellular location">
    <subcellularLocation>
        <location evidence="5">Nucleus</location>
    </subcellularLocation>
</comment>
<comment type="induction">
    <text evidence="2 4 9">Expression is negatively regulated by the transcription factor AflR, as well as by two signal transduction elements, protein kinase A and rasA. Expression is up-regulated in D.melanogaster-challenged colonies in a Drosophila-Aspergillus insect-fungus model system (PubMed:24023705). Expression is also controlled by mpkB (PubMed:18378656).</text>
</comment>
<comment type="PTM">
    <text evidence="8">Self-methylates at Met-207.</text>
</comment>
<comment type="disruption phenotype">
    <text evidence="2 3 7 9">Reduces secondary metabolite production, including sterigmatocystin, a carcinogen biochemically related to the agricultural contaminant aflatoxin. Results in constitutive sexual differentiation (PubMed:21152013). Impairs defense response against D.melanogaster larval grazing (PubMed:24023705).</text>
</comment>
<comment type="similarity">
    <text evidence="11">Belongs to the methyltransferase superfamily. LaeA methyltransferase family.</text>
</comment>
<comment type="sequence caution" evidence="11">
    <conflict type="erroneous gene model prediction">
        <sequence resource="EMBL-CDS" id="EAA65637"/>
    </conflict>
</comment>
<proteinExistence type="evidence at protein level"/>
<dbReference type="EC" id="2.1.1.-" evidence="8"/>
<dbReference type="EMBL" id="AACD01000013">
    <property type="protein sequence ID" value="EAA65637.1"/>
    <property type="status" value="ALT_SEQ"/>
    <property type="molecule type" value="Genomic_DNA"/>
</dbReference>
<dbReference type="EMBL" id="BN001308">
    <property type="protein sequence ID" value="CBF88745.1"/>
    <property type="molecule type" value="Genomic_DNA"/>
</dbReference>
<dbReference type="RefSeq" id="XP_658411.2">
    <property type="nucleotide sequence ID" value="XM_653319.2"/>
</dbReference>
<dbReference type="SMR" id="C8VQG9"/>
<dbReference type="STRING" id="227321.C8VQG9"/>
<dbReference type="EnsemblFungi" id="CBF88745">
    <property type="protein sequence ID" value="CBF88745"/>
    <property type="gene ID" value="ANIA_00807"/>
</dbReference>
<dbReference type="GeneID" id="2876583"/>
<dbReference type="KEGG" id="ani:ANIA_00807"/>
<dbReference type="VEuPathDB" id="FungiDB:AN0807"/>
<dbReference type="eggNOG" id="ENOG502QQMC">
    <property type="taxonomic scope" value="Eukaryota"/>
</dbReference>
<dbReference type="HOGENOM" id="CLU_010595_2_0_1"/>
<dbReference type="InParanoid" id="C8VQG9"/>
<dbReference type="OMA" id="CDFYAPF"/>
<dbReference type="OrthoDB" id="2013972at2759"/>
<dbReference type="Proteomes" id="UP000000560">
    <property type="component" value="Chromosome VIII"/>
</dbReference>
<dbReference type="GO" id="GO:0005634">
    <property type="term" value="C:nucleus"/>
    <property type="evidence" value="ECO:0000314"/>
    <property type="project" value="AspGD"/>
</dbReference>
<dbReference type="GO" id="GO:0008168">
    <property type="term" value="F:methyltransferase activity"/>
    <property type="evidence" value="ECO:0000314"/>
    <property type="project" value="AspGD"/>
</dbReference>
<dbReference type="GO" id="GO:0030437">
    <property type="term" value="P:ascospore formation"/>
    <property type="evidence" value="ECO:0000315"/>
    <property type="project" value="AspGD"/>
</dbReference>
<dbReference type="GO" id="GO:0051701">
    <property type="term" value="P:biological process involved in interaction with host"/>
    <property type="evidence" value="ECO:0000315"/>
    <property type="project" value="AspGD"/>
</dbReference>
<dbReference type="GO" id="GO:0032259">
    <property type="term" value="P:methylation"/>
    <property type="evidence" value="ECO:0007669"/>
    <property type="project" value="UniProtKB-KW"/>
</dbReference>
<dbReference type="GO" id="GO:0042316">
    <property type="term" value="P:penicillin metabolic process"/>
    <property type="evidence" value="ECO:0000315"/>
    <property type="project" value="AspGD"/>
</dbReference>
<dbReference type="GO" id="GO:0075296">
    <property type="term" value="P:positive regulation of ascospore formation"/>
    <property type="evidence" value="ECO:0000315"/>
    <property type="project" value="AspGD"/>
</dbReference>
<dbReference type="GO" id="GO:0033246">
    <property type="term" value="P:positive regulation of penicillin metabolic process"/>
    <property type="evidence" value="ECO:0000315"/>
    <property type="project" value="AspGD"/>
</dbReference>
<dbReference type="GO" id="GO:0010914">
    <property type="term" value="P:positive regulation of sterigmatocystin biosynthetic process"/>
    <property type="evidence" value="ECO:0000315"/>
    <property type="project" value="AspGD"/>
</dbReference>
<dbReference type="GO" id="GO:1900376">
    <property type="term" value="P:regulation of secondary metabolite biosynthetic process"/>
    <property type="evidence" value="ECO:0000315"/>
    <property type="project" value="AspGD"/>
</dbReference>
<dbReference type="GO" id="GO:0045460">
    <property type="term" value="P:sterigmatocystin metabolic process"/>
    <property type="evidence" value="ECO:0000315"/>
    <property type="project" value="AspGD"/>
</dbReference>
<dbReference type="CDD" id="cd02440">
    <property type="entry name" value="AdoMet_MTases"/>
    <property type="match status" value="1"/>
</dbReference>
<dbReference type="Gene3D" id="3.40.50.150">
    <property type="entry name" value="Vaccinia Virus protein VP39"/>
    <property type="match status" value="1"/>
</dbReference>
<dbReference type="InterPro" id="IPR029063">
    <property type="entry name" value="SAM-dependent_MTases_sf"/>
</dbReference>
<dbReference type="PANTHER" id="PTHR43591">
    <property type="entry name" value="METHYLTRANSFERASE"/>
    <property type="match status" value="1"/>
</dbReference>
<dbReference type="PANTHER" id="PTHR43591:SF30">
    <property type="entry name" value="PROTEIN-METHIONINE METHYLTRANSFERASE LAEA"/>
    <property type="match status" value="1"/>
</dbReference>
<dbReference type="Pfam" id="PF13489">
    <property type="entry name" value="Methyltransf_23"/>
    <property type="match status" value="1"/>
</dbReference>
<dbReference type="SUPFAM" id="SSF53335">
    <property type="entry name" value="S-adenosyl-L-methionine-dependent methyltransferases"/>
    <property type="match status" value="1"/>
</dbReference>
<name>LAEA_EMENI</name>
<feature type="chain" id="PRO_0000435741" description="Protein-methionine methyltransferase laeA">
    <location>
        <begin position="1"/>
        <end position="374"/>
    </location>
</feature>
<feature type="region of interest" description="Disordered" evidence="1">
    <location>
        <begin position="1"/>
        <end position="75"/>
    </location>
</feature>
<feature type="compositionally biased region" description="Polar residues" evidence="1">
    <location>
        <begin position="23"/>
        <end position="40"/>
    </location>
</feature>
<feature type="modified residue" description="S-methylmethionine" evidence="8">
    <location>
        <position position="207"/>
    </location>
</feature>
<feature type="mutagenesis site" description="Abolishes self-methylation." evidence="8">
    <original>M</original>
    <variation>A</variation>
    <location>
        <position position="207"/>
    </location>
</feature>
<sequence>MFEMGPVGTRLPAMTSPAHNHYSYHSPTSSDRGRSRQNSDAMDIQSITEREPATRYAVAGGPAPWNRNGSPSMSPMYSNNSERNQFHEENGRTYHGFRRGMYFLPCDEQEQDRLDIFHKLFTVARVSESLIYAPHPTNGRFLDLGCGTGIWAIEVANKYPDAFVAGVDLAPIQPPNHPKNCEFYAPFDFEAPWAMGEDSWDLIHLQMGCGSVMGWPNLYRRIFAHLRPGAWFEQVEIDFEPRCDDRSLDGTALRHWYDCLKQATAETMRPIAHSSRDTIKDLQDAGFTEIDHQIVGLPLNPWHQDEHERKVARWYNLAVSESIENLSLAPFSRVYRWPLERIQQLAADVKSEAFNKEIHAYNILHIYQARKPLR</sequence>
<protein>
    <recommendedName>
        <fullName evidence="11">Protein-methionine methyltransferase laeA</fullName>
        <ecNumber evidence="8">2.1.1.-</ecNumber>
    </recommendedName>
    <alternativeName>
        <fullName evidence="11">Secondary metabolism regulator laeA</fullName>
    </alternativeName>
    <alternativeName>
        <fullName evidence="11">Velvet complex subunit laeA</fullName>
    </alternativeName>
</protein>
<evidence type="ECO:0000256" key="1">
    <source>
        <dbReference type="SAM" id="MobiDB-lite"/>
    </source>
</evidence>
<evidence type="ECO:0000269" key="2">
    <source>
    </source>
</evidence>
<evidence type="ECO:0000269" key="3">
    <source>
    </source>
</evidence>
<evidence type="ECO:0000269" key="4">
    <source>
    </source>
</evidence>
<evidence type="ECO:0000269" key="5">
    <source>
    </source>
</evidence>
<evidence type="ECO:0000269" key="6">
    <source>
    </source>
</evidence>
<evidence type="ECO:0000269" key="7">
    <source>
    </source>
</evidence>
<evidence type="ECO:0000269" key="8">
    <source>
    </source>
</evidence>
<evidence type="ECO:0000269" key="9">
    <source>
    </source>
</evidence>
<evidence type="ECO:0000303" key="10">
    <source>
    </source>
</evidence>
<evidence type="ECO:0000305" key="11"/>
<organism>
    <name type="scientific">Emericella nidulans (strain FGSC A4 / ATCC 38163 / CBS 112.46 / NRRL 194 / M139)</name>
    <name type="common">Aspergillus nidulans</name>
    <dbReference type="NCBI Taxonomy" id="227321"/>
    <lineage>
        <taxon>Eukaryota</taxon>
        <taxon>Fungi</taxon>
        <taxon>Dikarya</taxon>
        <taxon>Ascomycota</taxon>
        <taxon>Pezizomycotina</taxon>
        <taxon>Eurotiomycetes</taxon>
        <taxon>Eurotiomycetidae</taxon>
        <taxon>Eurotiales</taxon>
        <taxon>Aspergillaceae</taxon>
        <taxon>Aspergillus</taxon>
        <taxon>Aspergillus subgen. Nidulantes</taxon>
    </lineage>
</organism>
<keyword id="KW-0488">Methylation</keyword>
<keyword id="KW-0489">Methyltransferase</keyword>
<keyword id="KW-0539">Nucleus</keyword>
<keyword id="KW-1185">Reference proteome</keyword>
<keyword id="KW-0949">S-adenosyl-L-methionine</keyword>
<keyword id="KW-0749">Sporulation</keyword>
<keyword id="KW-0804">Transcription</keyword>
<keyword id="KW-0805">Transcription regulation</keyword>
<keyword id="KW-0808">Transferase</keyword>
<keyword id="KW-0843">Virulence</keyword>
<gene>
    <name evidence="10" type="primary">laeA</name>
    <name type="ORF">ANIA_00807</name>
</gene>
<reference key="1">
    <citation type="journal article" date="2005" name="Nature">
        <title>Sequencing of Aspergillus nidulans and comparative analysis with A. fumigatus and A. oryzae.</title>
        <authorList>
            <person name="Galagan J.E."/>
            <person name="Calvo S.E."/>
            <person name="Cuomo C."/>
            <person name="Ma L.-J."/>
            <person name="Wortman J.R."/>
            <person name="Batzoglou S."/>
            <person name="Lee S.-I."/>
            <person name="Bastuerkmen M."/>
            <person name="Spevak C.C."/>
            <person name="Clutterbuck J."/>
            <person name="Kapitonov V."/>
            <person name="Jurka J."/>
            <person name="Scazzocchio C."/>
            <person name="Farman M.L."/>
            <person name="Butler J."/>
            <person name="Purcell S."/>
            <person name="Harris S."/>
            <person name="Braus G.H."/>
            <person name="Draht O."/>
            <person name="Busch S."/>
            <person name="D'Enfert C."/>
            <person name="Bouchier C."/>
            <person name="Goldman G.H."/>
            <person name="Bell-Pedersen D."/>
            <person name="Griffiths-Jones S."/>
            <person name="Doonan J.H."/>
            <person name="Yu J."/>
            <person name="Vienken K."/>
            <person name="Pain A."/>
            <person name="Freitag M."/>
            <person name="Selker E.U."/>
            <person name="Archer D.B."/>
            <person name="Penalva M.A."/>
            <person name="Oakley B.R."/>
            <person name="Momany M."/>
            <person name="Tanaka T."/>
            <person name="Kumagai T."/>
            <person name="Asai K."/>
            <person name="Machida M."/>
            <person name="Nierman W.C."/>
            <person name="Denning D.W."/>
            <person name="Caddick M.X."/>
            <person name="Hynes M."/>
            <person name="Paoletti M."/>
            <person name="Fischer R."/>
            <person name="Miller B.L."/>
            <person name="Dyer P.S."/>
            <person name="Sachs M.S."/>
            <person name="Osmani S.A."/>
            <person name="Birren B.W."/>
        </authorList>
    </citation>
    <scope>NUCLEOTIDE SEQUENCE [LARGE SCALE GENOMIC DNA]</scope>
    <source>
        <strain>FGSC A4 / ATCC 38163 / CBS 112.46 / NRRL 194 / M139</strain>
    </source>
</reference>
<reference key="2">
    <citation type="journal article" date="2009" name="Fungal Genet. Biol.">
        <title>The 2008 update of the Aspergillus nidulans genome annotation: a community effort.</title>
        <authorList>
            <person name="Wortman J.R."/>
            <person name="Gilsenan J.M."/>
            <person name="Joardar V."/>
            <person name="Deegan J."/>
            <person name="Clutterbuck J."/>
            <person name="Andersen M.R."/>
            <person name="Archer D."/>
            <person name="Bencina M."/>
            <person name="Braus G."/>
            <person name="Coutinho P."/>
            <person name="von Dohren H."/>
            <person name="Doonan J."/>
            <person name="Driessen A.J."/>
            <person name="Durek P."/>
            <person name="Espeso E."/>
            <person name="Fekete E."/>
            <person name="Flipphi M."/>
            <person name="Estrada C.G."/>
            <person name="Geysens S."/>
            <person name="Goldman G."/>
            <person name="de Groot P.W."/>
            <person name="Hansen K."/>
            <person name="Harris S.D."/>
            <person name="Heinekamp T."/>
            <person name="Helmstaedt K."/>
            <person name="Henrissat B."/>
            <person name="Hofmann G."/>
            <person name="Homan T."/>
            <person name="Horio T."/>
            <person name="Horiuchi H."/>
            <person name="James S."/>
            <person name="Jones M."/>
            <person name="Karaffa L."/>
            <person name="Karanyi Z."/>
            <person name="Kato M."/>
            <person name="Keller N."/>
            <person name="Kelly D.E."/>
            <person name="Kiel J.A."/>
            <person name="Kim J.M."/>
            <person name="van der Klei I.J."/>
            <person name="Klis F.M."/>
            <person name="Kovalchuk A."/>
            <person name="Krasevec N."/>
            <person name="Kubicek C.P."/>
            <person name="Liu B."/>
            <person name="Maccabe A."/>
            <person name="Meyer V."/>
            <person name="Mirabito P."/>
            <person name="Miskei M."/>
            <person name="Mos M."/>
            <person name="Mullins J."/>
            <person name="Nelson D.R."/>
            <person name="Nielsen J."/>
            <person name="Oakley B.R."/>
            <person name="Osmani S.A."/>
            <person name="Pakula T."/>
            <person name="Paszewski A."/>
            <person name="Paulsen I."/>
            <person name="Pilsyk S."/>
            <person name="Pocsi I."/>
            <person name="Punt P.J."/>
            <person name="Ram A.F."/>
            <person name="Ren Q."/>
            <person name="Robellet X."/>
            <person name="Robson G."/>
            <person name="Seiboth B."/>
            <person name="van Solingen P."/>
            <person name="Specht T."/>
            <person name="Sun J."/>
            <person name="Taheri-Talesh N."/>
            <person name="Takeshita N."/>
            <person name="Ussery D."/>
            <person name="vanKuyk P.A."/>
            <person name="Visser H."/>
            <person name="van de Vondervoort P.J."/>
            <person name="de Vries R.P."/>
            <person name="Walton J."/>
            <person name="Xiang X."/>
            <person name="Xiong Y."/>
            <person name="Zeng A.P."/>
            <person name="Brandt B.W."/>
            <person name="Cornell M.J."/>
            <person name="van den Hondel C.A."/>
            <person name="Visser J."/>
            <person name="Oliver S.G."/>
            <person name="Turner G."/>
        </authorList>
    </citation>
    <scope>GENOME REANNOTATION</scope>
    <source>
        <strain>FGSC A4 / ATCC 38163 / CBS 112.46 / NRRL 194 / M139</strain>
    </source>
</reference>
<reference key="3">
    <citation type="journal article" date="2004" name="Eukaryot. Cell">
        <title>LaeA, a regulator of secondary metabolism in Aspergillus spp.</title>
        <authorList>
            <person name="Bok J.W."/>
            <person name="Keller N.P."/>
        </authorList>
    </citation>
    <scope>FUNCTION</scope>
    <scope>DISRUPTION PHENOTYPE</scope>
    <scope>INDUCTION</scope>
    <source>
        <strain>TJH3.40</strain>
    </source>
</reference>
<reference key="4">
    <citation type="journal article" date="2006" name="Mol. Microbiol.">
        <title>Secondary metabolic gene cluster silencing in Aspergillus nidulans.</title>
        <authorList>
            <person name="Bok J.W."/>
            <person name="Noordermeer D."/>
            <person name="Kale S.P."/>
            <person name="Keller N.P."/>
        </authorList>
    </citation>
    <scope>FUNCTION</scope>
    <scope>DISRUPTION PHENOTYPE</scope>
</reference>
<reference key="5">
    <citation type="journal article" date="2008" name="Appl. Environ. Microbiol.">
        <title>Aspergillus nidulans natural product biosynthesis is regulated by mpkB, a putative pheromone response mitogen-activated protein kinase.</title>
        <authorList>
            <person name="Atoui A."/>
            <person name="Bao D."/>
            <person name="Kaur N."/>
            <person name="Grayburn W.S."/>
            <person name="Calvo A.M."/>
        </authorList>
    </citation>
    <scope>INDUCTION</scope>
</reference>
<reference key="6">
    <citation type="journal article" date="2008" name="Science">
        <title>VelB/VeA/LaeA complex coordinates light signal with fungal development and secondary metabolism.</title>
        <authorList>
            <person name="Bayram O."/>
            <person name="Krappmann S."/>
            <person name="Ni M."/>
            <person name="Bok J.W."/>
            <person name="Helmstaedt K."/>
            <person name="Valerius O."/>
            <person name="Braus-Stromeyer S."/>
            <person name="Kwon N.J."/>
            <person name="Keller N.P."/>
            <person name="Yu J.H."/>
            <person name="Braus G.H."/>
        </authorList>
    </citation>
    <scope>IDENTIFICATION BY MASS SPECTROMETRY</scope>
    <scope>IDENTIFICATION IN THE VELVET COMPLEX</scope>
    <scope>FUNCTION</scope>
    <scope>SUBCELLULAR LOCATION</scope>
</reference>
<reference key="7">
    <citation type="journal article" date="2010" name="Mol. Microbiol.">
        <title>Heterochromatic marks are associated with the repression of secondary metabolism clusters in Aspergillus nidulans.</title>
        <authorList>
            <person name="Reyes-Dominguez Y."/>
            <person name="Bok J.W."/>
            <person name="Berger H."/>
            <person name="Shwab E.K."/>
            <person name="Basheer A."/>
            <person name="Gallmetzer A."/>
            <person name="Scazzocchio C."/>
            <person name="Keller N."/>
            <person name="Strauss J."/>
        </authorList>
    </citation>
    <scope>FUNCTION</scope>
</reference>
<reference key="8">
    <citation type="journal article" date="2010" name="PLoS Genet.">
        <title>LaeA control of velvet family regulatory proteins for light-dependent development and fungal cell-type specificity.</title>
        <authorList>
            <person name="Sarikaya Bayram O."/>
            <person name="Bayram O."/>
            <person name="Valerius O."/>
            <person name="Park H.S."/>
            <person name="Irniger S."/>
            <person name="Gerke J."/>
            <person name="Ni M."/>
            <person name="Han K.H."/>
            <person name="Yu J.H."/>
            <person name="Braus G.H."/>
        </authorList>
    </citation>
    <scope>FUNCTION</scope>
    <scope>DISRUPTION PHENOTYPE</scope>
</reference>
<reference key="9">
    <citation type="journal article" date="2012" name="Methods Mol. Biol.">
        <title>Identification of protein complexes from filamentous fungi with tandem affinity purification.</title>
        <authorList>
            <person name="Bayram O."/>
            <person name="Bayram O.S."/>
            <person name="Valerius O."/>
            <person name="Joehnk B."/>
            <person name="Braus G.H."/>
        </authorList>
    </citation>
    <scope>IDENTIFICATION IN THE VELVET COMPLEX</scope>
</reference>
<reference key="10">
    <citation type="journal article" date="2013" name="PLoS Genet.">
        <title>Secondary metabolism and development is mediated by LlmF control of VeA subcellular localization in Aspergillus nidulans.</title>
        <authorList>
            <person name="Palmer J.M."/>
            <person name="Theisen J.M."/>
            <person name="Duran R.M."/>
            <person name="Grayburn W.S."/>
            <person name="Calvo A.M."/>
            <person name="Keller N.P."/>
        </authorList>
    </citation>
    <scope>S-ADENOSYL METHIONINE-BINDING</scope>
</reference>
<reference key="11">
    <citation type="journal article" date="2013" name="J. Biol. Chem.">
        <title>A novel automethylation reaction in the Aspergillus nidulans LaeA protein generates S-methylmethionine.</title>
        <authorList>
            <person name="Patananan A.N."/>
            <person name="Palmer J.M."/>
            <person name="Garvey G.S."/>
            <person name="Keller N.P."/>
            <person name="Clarke S.G."/>
        </authorList>
    </citation>
    <scope>FUNCTION</scope>
    <scope>CATALYTIC ACTIVITY</scope>
    <scope>MUTAGENESIS OF MET-207</scope>
    <scope>METHYLATION AT MET-207</scope>
</reference>
<reference key="12">
    <citation type="journal article" date="2013" name="PLoS ONE">
        <title>Induced fungal resistance to insect grazing: reciprocal fitness consequences and fungal gene expression in the Drosophila-Aspergillus model system.</title>
        <authorList>
            <person name="Caballero Ortiz S."/>
            <person name="Trienens M."/>
            <person name="Rohlfs M."/>
        </authorList>
    </citation>
    <scope>FUNCTION</scope>
    <scope>DISRUPTION PHENOTYPE</scope>
    <scope>INDUCTION</scope>
</reference>